<evidence type="ECO:0000250" key="1">
    <source>
        <dbReference type="UniProtKB" id="A6VDI6"/>
    </source>
</evidence>
<evidence type="ECO:0000269" key="2">
    <source>
    </source>
</evidence>
<evidence type="ECO:0000269" key="3">
    <source>
    </source>
</evidence>
<evidence type="ECO:0000269" key="4">
    <source>
    </source>
</evidence>
<evidence type="ECO:0000269" key="5">
    <source>
    </source>
</evidence>
<evidence type="ECO:0000303" key="6">
    <source>
    </source>
</evidence>
<evidence type="ECO:0000303" key="7">
    <source>
    </source>
</evidence>
<evidence type="ECO:0000305" key="8"/>
<evidence type="ECO:0007829" key="9">
    <source>
        <dbReference type="PDB" id="5W7M"/>
    </source>
</evidence>
<feature type="chain" id="PRO_0000436348" description="Glandicoline B O-methyltransferase roqN">
    <location>
        <begin position="1"/>
        <end position="288"/>
    </location>
</feature>
<feature type="binding site" evidence="1">
    <location>
        <position position="57"/>
    </location>
    <ligand>
        <name>S-adenosyl-L-methionine</name>
        <dbReference type="ChEBI" id="CHEBI:59789"/>
    </ligand>
</feature>
<feature type="binding site" evidence="1">
    <location>
        <position position="82"/>
    </location>
    <ligand>
        <name>S-adenosyl-L-methionine</name>
        <dbReference type="ChEBI" id="CHEBI:59789"/>
    </ligand>
</feature>
<feature type="binding site" evidence="1">
    <location>
        <begin position="109"/>
        <end position="110"/>
    </location>
    <ligand>
        <name>S-adenosyl-L-methionine</name>
        <dbReference type="ChEBI" id="CHEBI:59789"/>
    </ligand>
</feature>
<feature type="helix" evidence="9">
    <location>
        <begin position="17"/>
        <end position="27"/>
    </location>
</feature>
<feature type="helix" evidence="9">
    <location>
        <begin position="28"/>
        <end position="30"/>
    </location>
</feature>
<feature type="helix" evidence="9">
    <location>
        <begin position="31"/>
        <end position="38"/>
    </location>
</feature>
<feature type="helix" evidence="9">
    <location>
        <begin position="40"/>
        <end position="42"/>
    </location>
</feature>
<feature type="strand" evidence="9">
    <location>
        <begin position="46"/>
        <end position="53"/>
    </location>
</feature>
<feature type="turn" evidence="9">
    <location>
        <begin position="56"/>
        <end position="58"/>
    </location>
</feature>
<feature type="helix" evidence="9">
    <location>
        <begin position="59"/>
        <end position="67"/>
    </location>
</feature>
<feature type="turn" evidence="9">
    <location>
        <begin position="68"/>
        <end position="70"/>
    </location>
</feature>
<feature type="helix" evidence="9">
    <location>
        <begin position="73"/>
        <end position="75"/>
    </location>
</feature>
<feature type="strand" evidence="9">
    <location>
        <begin position="76"/>
        <end position="83"/>
    </location>
</feature>
<feature type="helix" evidence="9">
    <location>
        <begin position="85"/>
        <end position="98"/>
    </location>
</feature>
<feature type="strand" evidence="9">
    <location>
        <begin position="103"/>
        <end position="107"/>
    </location>
</feature>
<feature type="strand" evidence="9">
    <location>
        <begin position="120"/>
        <end position="127"/>
    </location>
</feature>
<feature type="helix" evidence="9">
    <location>
        <begin position="129"/>
        <end position="131"/>
    </location>
</feature>
<feature type="helix" evidence="9">
    <location>
        <begin position="135"/>
        <end position="145"/>
    </location>
</feature>
<feature type="strand" evidence="9">
    <location>
        <begin position="146"/>
        <end position="159"/>
    </location>
</feature>
<feature type="helix" evidence="9">
    <location>
        <begin position="162"/>
        <end position="171"/>
    </location>
</feature>
<feature type="strand" evidence="9">
    <location>
        <begin position="173"/>
        <end position="175"/>
    </location>
</feature>
<feature type="helix" evidence="9">
    <location>
        <begin position="182"/>
        <end position="186"/>
    </location>
</feature>
<feature type="strand" evidence="9">
    <location>
        <begin position="188"/>
        <end position="190"/>
    </location>
</feature>
<feature type="turn" evidence="9">
    <location>
        <begin position="191"/>
        <end position="194"/>
    </location>
</feature>
<feature type="helix" evidence="9">
    <location>
        <begin position="196"/>
        <end position="206"/>
    </location>
</feature>
<feature type="strand" evidence="9">
    <location>
        <begin position="209"/>
        <end position="223"/>
    </location>
</feature>
<feature type="helix" evidence="9">
    <location>
        <begin position="224"/>
        <end position="231"/>
    </location>
</feature>
<feature type="helix" evidence="9">
    <location>
        <begin position="232"/>
        <end position="234"/>
    </location>
</feature>
<feature type="helix" evidence="9">
    <location>
        <begin position="235"/>
        <end position="242"/>
    </location>
</feature>
<feature type="helix" evidence="9">
    <location>
        <begin position="245"/>
        <end position="251"/>
    </location>
</feature>
<feature type="helix" evidence="9">
    <location>
        <begin position="252"/>
        <end position="254"/>
    </location>
</feature>
<feature type="helix" evidence="9">
    <location>
        <begin position="255"/>
        <end position="267"/>
    </location>
</feature>
<feature type="strand" evidence="9">
    <location>
        <begin position="272"/>
        <end position="285"/>
    </location>
</feature>
<accession>B6HJU2</accession>
<sequence length="288" mass="32277">MTRATNFTELYAGKGILDTYMVAEKITRYYTQDLIQLSGLSESSLTPLVILDLACGTGVVSDALHDMLNFQPKGNWELTCGDISTELTGHVKQKILERGWENSIAKVVDAQNTELPTGHYTHVFAALAFTSFPDTYAAMKEVMRILQPGGTLTISTWQRTEWLAVVEAAVAIIPADLPFPTTKEFMSCMNPGWDSEDYVHSRFEEAGFHSVQVTTISKQFETSVEDLYKIAQPVIPIIVSKWWNQEQRDKYENDILPALQRHLNETYGENGLVPQEWTAVFATGQKGS</sequence>
<name>ROQN_PENRW</name>
<keyword id="KW-0002">3D-structure</keyword>
<keyword id="KW-0378">Hydrolase</keyword>
<keyword id="KW-0489">Methyltransferase</keyword>
<keyword id="KW-1185">Reference proteome</keyword>
<keyword id="KW-0949">S-adenosyl-L-methionine</keyword>
<keyword id="KW-0808">Transferase</keyword>
<organism>
    <name type="scientific">Penicillium rubens (strain ATCC 28089 / DSM 1075 / NRRL 1951 / Wisconsin 54-1255)</name>
    <name type="common">Penicillium chrysogenum</name>
    <dbReference type="NCBI Taxonomy" id="500485"/>
    <lineage>
        <taxon>Eukaryota</taxon>
        <taxon>Fungi</taxon>
        <taxon>Dikarya</taxon>
        <taxon>Ascomycota</taxon>
        <taxon>Pezizomycotina</taxon>
        <taxon>Eurotiomycetes</taxon>
        <taxon>Eurotiomycetidae</taxon>
        <taxon>Eurotiales</taxon>
        <taxon>Aspergillaceae</taxon>
        <taxon>Penicillium</taxon>
        <taxon>Penicillium chrysogenum species complex</taxon>
    </lineage>
</organism>
<dbReference type="EC" id="3.1.1.-" evidence="2 3 4"/>
<dbReference type="EMBL" id="AM920436">
    <property type="protein sequence ID" value="CAP96441.1"/>
    <property type="molecule type" value="Genomic_DNA"/>
</dbReference>
<dbReference type="RefSeq" id="XP_002568554.1">
    <property type="nucleotide sequence ID" value="XM_002568508.1"/>
</dbReference>
<dbReference type="PDB" id="5W7M">
    <property type="method" value="X-ray"/>
    <property type="resolution" value="1.70 A"/>
    <property type="chains" value="A=1-288"/>
</dbReference>
<dbReference type="PDBsum" id="5W7M"/>
<dbReference type="SMR" id="B6HJU2"/>
<dbReference type="STRING" id="500485.B6HJU2"/>
<dbReference type="GeneID" id="8315545"/>
<dbReference type="KEGG" id="pcs:N7525_008083"/>
<dbReference type="VEuPathDB" id="FungiDB:PCH_Pc21g15440"/>
<dbReference type="eggNOG" id="ENOG502S4V1">
    <property type="taxonomic scope" value="Eukaryota"/>
</dbReference>
<dbReference type="HOGENOM" id="CLU_065416_0_0_1"/>
<dbReference type="OMA" id="TLAFTTW"/>
<dbReference type="OrthoDB" id="66144at2759"/>
<dbReference type="BioCyc" id="PCHR:PC21G15440-MONOMER"/>
<dbReference type="Proteomes" id="UP000000724">
    <property type="component" value="Contig Pc00c21"/>
</dbReference>
<dbReference type="GO" id="GO:0016787">
    <property type="term" value="F:hydrolase activity"/>
    <property type="evidence" value="ECO:0007669"/>
    <property type="project" value="UniProtKB-KW"/>
</dbReference>
<dbReference type="GO" id="GO:0008168">
    <property type="term" value="F:methyltransferase activity"/>
    <property type="evidence" value="ECO:0007669"/>
    <property type="project" value="UniProtKB-KW"/>
</dbReference>
<dbReference type="GO" id="GO:0032259">
    <property type="term" value="P:methylation"/>
    <property type="evidence" value="ECO:0007669"/>
    <property type="project" value="UniProtKB-KW"/>
</dbReference>
<dbReference type="CDD" id="cd02440">
    <property type="entry name" value="AdoMet_MTases"/>
    <property type="match status" value="1"/>
</dbReference>
<dbReference type="Gene3D" id="3.40.50.150">
    <property type="entry name" value="Vaccinia Virus protein VP39"/>
    <property type="match status" value="1"/>
</dbReference>
<dbReference type="InterPro" id="IPR041698">
    <property type="entry name" value="Methyltransf_25"/>
</dbReference>
<dbReference type="InterPro" id="IPR029063">
    <property type="entry name" value="SAM-dependent_MTases_sf"/>
</dbReference>
<dbReference type="PANTHER" id="PTHR43591">
    <property type="entry name" value="METHYLTRANSFERASE"/>
    <property type="match status" value="1"/>
</dbReference>
<dbReference type="PANTHER" id="PTHR43591:SF110">
    <property type="entry name" value="RHODANESE DOMAIN-CONTAINING PROTEIN"/>
    <property type="match status" value="1"/>
</dbReference>
<dbReference type="Pfam" id="PF13649">
    <property type="entry name" value="Methyltransf_25"/>
    <property type="match status" value="1"/>
</dbReference>
<dbReference type="SUPFAM" id="SSF53335">
    <property type="entry name" value="S-adenosyl-L-methionine-dependent methyltransferases"/>
    <property type="match status" value="1"/>
</dbReference>
<gene>
    <name evidence="7" type="primary">roqN</name>
    <name evidence="6" type="synonym">gmt</name>
    <name type="ORF">Pc21g15440</name>
</gene>
<reference key="1">
    <citation type="journal article" date="2008" name="Nat. Biotechnol.">
        <title>Genome sequencing and analysis of the filamentous fungus Penicillium chrysogenum.</title>
        <authorList>
            <person name="van den Berg M.A."/>
            <person name="Albang R."/>
            <person name="Albermann K."/>
            <person name="Badger J.H."/>
            <person name="Daran J.-M."/>
            <person name="Driessen A.J.M."/>
            <person name="Garcia-Estrada C."/>
            <person name="Fedorova N.D."/>
            <person name="Harris D.M."/>
            <person name="Heijne W.H.M."/>
            <person name="Joardar V.S."/>
            <person name="Kiel J.A.K.W."/>
            <person name="Kovalchuk A."/>
            <person name="Martin J.F."/>
            <person name="Nierman W.C."/>
            <person name="Nijland J.G."/>
            <person name="Pronk J.T."/>
            <person name="Roubos J.A."/>
            <person name="van der Klei I.J."/>
            <person name="van Peij N.N.M.E."/>
            <person name="Veenhuis M."/>
            <person name="von Doehren H."/>
            <person name="Wagner C."/>
            <person name="Wortman J.R."/>
            <person name="Bovenberg R.A.L."/>
        </authorList>
    </citation>
    <scope>NUCLEOTIDE SEQUENCE [LARGE SCALE GENOMIC DNA]</scope>
    <source>
        <strain>ATCC 28089 / DSM 1075 / NRRL 1951 / Wisconsin 54-1255</strain>
    </source>
</reference>
<reference key="2">
    <citation type="journal article" date="2011" name="Chem. Biol.">
        <title>A single cluster of coregulated genes encodes the biosynthesis of the mycotoxins roquefortine C and meleagrin in Penicillium chrysogenum.</title>
        <authorList>
            <person name="Garcia-Estrada C."/>
            <person name="Ullan R.V."/>
            <person name="Albillos S.M."/>
            <person name="Fernandez-Bodega M.A."/>
            <person name="Durek P."/>
            <person name="von Doehren H."/>
            <person name="Martin J.F."/>
        </authorList>
    </citation>
    <scope>FUNCTION</scope>
    <scope>DISRUPTION PHENOTYPE</scope>
</reference>
<reference key="3">
    <citation type="journal article" date="2013" name="J. Biol. Chem.">
        <title>Novel key metabolites reveal further branching of the roquefortine/meleagrin biosynthetic pathway.</title>
        <authorList>
            <person name="Ries M.I."/>
            <person name="Ali H."/>
            <person name="Lankhorst P.P."/>
            <person name="Hankemeier T."/>
            <person name="Bovenberg R.A."/>
            <person name="Driessen A.J."/>
            <person name="Vreeken R.J."/>
        </authorList>
    </citation>
    <scope>FUNCTION</scope>
    <scope>CATALYTIC ACTIVITY</scope>
    <scope>DISRUPTION PHENOTYPE</scope>
</reference>
<reference key="4">
    <citation type="journal article" date="2013" name="PLoS ONE">
        <title>A branched biosynthetic pathway is involved in production of roquefortine and related compounds in Penicillium chrysogenum.</title>
        <authorList>
            <person name="Ali H."/>
            <person name="Ries M.I."/>
            <person name="Nijland J.G."/>
            <person name="Lankhorst P.P."/>
            <person name="Hankemeier T."/>
            <person name="Bovenberg R.A."/>
            <person name="Vreeken R.J."/>
            <person name="Driessen A.J."/>
        </authorList>
    </citation>
    <scope>FUNCTION</scope>
    <scope>CATALYTIC ACTIVITY</scope>
    <scope>INDUCTION</scope>
    <scope>DISRUPTION PHENOTYPE</scope>
</reference>
<reference key="5">
    <citation type="journal article" date="2016" name="Bioorg. Med. Chem.">
        <title>The indole alkaloid meleagrin, from the olive tree endophytic fungus Penicillium chrysogenum, as a novel lead for the control of c-Met-dependent breast cancer proliferation, migration and invasion.</title>
        <authorList>
            <person name="Mady M.S."/>
            <person name="Mohyeldin M.M."/>
            <person name="Ebrahim H.Y."/>
            <person name="Elsayed H.E."/>
            <person name="Houssen W.E."/>
            <person name="Haggag E.G."/>
            <person name="Soliman R.F."/>
            <person name="El Sayed K.A."/>
        </authorList>
    </citation>
    <scope>BIOTECHNOLOGY</scope>
</reference>
<proteinExistence type="evidence at protein level"/>
<protein>
    <recommendedName>
        <fullName evidence="8">Glandicoline B O-methyltransferase roqN</fullName>
        <ecNumber evidence="2 3 4">3.1.1.-</ecNumber>
    </recommendedName>
    <alternativeName>
        <fullName evidence="7">Roquefortine/meleagrin synthesis protein N</fullName>
    </alternativeName>
</protein>
<comment type="function">
    <text evidence="2 3 4">Glandicoline B O-methyltransferase; part of the gene cluster that mediates the biosynthesis of the mycotoxin meleagrin (PubMed:22118684, PubMed:23776469). The first stage is catalyzed by the dipeptide synthase roqA which condenses histidine and tryptophan to produce histidyltryptophanyldiketopiperazine (HTD) (PubMed:22118684, PubMed:23776469). HTD is then converted to roquefortine C through two possible pathways (PubMed:23776469). In the first pathway, prenyltransferase roqD transforms HTD to the intermediate roquefortine D, which is in turn converted to roquefortine C by the cytochrome P450 monooxygenase roqR (PubMed:23776469). In the second pathway, HTD is first converted to the intermediate dehydrohistidyltryptophanyldi-ketopiperazine (DHTD) by roqR which is then prenylated by roqD to form roquefortine C (PubMed:23776469). Roquefortine C can be further transformed to meleagrin via three more reactions including oxydation to glandicolin A by roqM, which is further reduced to glandicoline B by roqO (PubMed:23776469). Finally, glandicoline B is converted to meleagrin by the glandicoline B O-methyltransferase roqN (PubMed:22118684, PubMed:23776469). More studies identified further branching and additional metabolites produced by the roquefortine/meleagrin cluster, including roquefortine F, roquefortine L, roquefortine M, roquefortine N and neoxaline (PubMed:24225953).</text>
</comment>
<comment type="catalytic activity">
    <reaction evidence="2">
        <text>glandicoline B + S-adenosyl-L-methionine = meleagrin + S-adenosyl-L-homocysteine + H(+)</text>
        <dbReference type="Rhea" id="RHEA:51732"/>
        <dbReference type="ChEBI" id="CHEBI:15378"/>
        <dbReference type="ChEBI" id="CHEBI:57856"/>
        <dbReference type="ChEBI" id="CHEBI:59789"/>
        <dbReference type="ChEBI" id="CHEBI:70399"/>
        <dbReference type="ChEBI" id="CHEBI:134347"/>
    </reaction>
</comment>
<comment type="pathway">
    <text evidence="2 3 4">Alkaloid biosynthesis.</text>
</comment>
<comment type="induction">
    <text evidence="3">Expression is decreased in presence of phenylacetic acid (PAA) (PubMed:23776469).</text>
</comment>
<comment type="disruption phenotype">
    <text evidence="2 3 4">Leads to the accumulation of glandicoline B (PubMed:22118684, PubMed:23776469). Does not affect the production of roquefortine C but decreases the production of meleagrin (PubMed:22118684, PubMed:23776469, PubMed:24225953).</text>
</comment>
<comment type="biotechnology">
    <text evidence="5">The indole alkaloid meleagrin was shown to be a good candidate to control c-Met-dependent breast cancer proliferation, migration and invasion (PubMed:26692349).</text>
</comment>
<comment type="similarity">
    <text evidence="8">Belongs to the class I-like SAM-binding methyltransferase superfamily.</text>
</comment>